<proteinExistence type="evidence at protein level"/>
<evidence type="ECO:0000269" key="1">
    <source>
    </source>
</evidence>
<evidence type="ECO:0000269" key="2">
    <source>
    </source>
</evidence>
<evidence type="ECO:0000305" key="3"/>
<comment type="function">
    <text>Mitochondrial membrane ATP synthase (F(1)F(0) ATP synthase or Complex V) produces ATP from ADP in the presence of a proton gradient across the membrane which is generated by electron transport complexes of the respiratory chain. F-type ATPases consist of two structural domains, F(1) - containing the extramembraneous catalytic core and F(0) - containing the membrane proton channel, linked together by a central stalk and a peripheral stalk. During catalysis, ATP synthesis in the catalytic domain of F(1) is coupled via a rotary mechanism of the central stalk subunits to proton translocation. Part of the complex F(0) domain. Minor subunit located with subunit a in the membrane.</text>
</comment>
<comment type="subunit">
    <text>F-type ATPases have 2 components, CF(1) - the catalytic core - and CF(0) - the membrane proton channel. In yeast, the dimeric form of ATP synthase consists of 17 polypeptides: alpha, beta, gamma, delta, epsilon, 4 (B), 5 (OSCP), 6 (A), 8, 9 (C), d, E (Tim11), f, g, h, i/j and k.</text>
</comment>
<comment type="subcellular location">
    <subcellularLocation>
        <location>Mitochondrion</location>
    </subcellularLocation>
    <subcellularLocation>
        <location>Mitochondrion inner membrane</location>
    </subcellularLocation>
</comment>
<comment type="mass spectrometry"/>
<comment type="miscellaneous">
    <text evidence="1">Present with 14600 molecules/cell in log phase SD medium.</text>
</comment>
<comment type="similarity">
    <text evidence="3">Belongs to the ATPase F chain family.</text>
</comment>
<dbReference type="EMBL" id="U72652">
    <property type="protein sequence ID" value="AAB70108.1"/>
    <property type="molecule type" value="Genomic_DNA"/>
</dbReference>
<dbReference type="EMBL" id="U28373">
    <property type="protein sequence ID" value="AAB64813.1"/>
    <property type="molecule type" value="Genomic_DNA"/>
</dbReference>
<dbReference type="EMBL" id="BK006938">
    <property type="protein sequence ID" value="DAA12219.1"/>
    <property type="molecule type" value="Genomic_DNA"/>
</dbReference>
<dbReference type="PIR" id="S61172">
    <property type="entry name" value="S61172"/>
</dbReference>
<dbReference type="RefSeq" id="NP_010665.3">
    <property type="nucleotide sequence ID" value="NM_001180685.3"/>
</dbReference>
<dbReference type="PDB" id="6B2Z">
    <property type="method" value="EM"/>
    <property type="resolution" value="3.60 A"/>
    <property type="chains" value="Q/f=7-101"/>
</dbReference>
<dbReference type="PDB" id="6B8H">
    <property type="method" value="EM"/>
    <property type="resolution" value="3.60 A"/>
    <property type="chains" value="f/t=7-101"/>
</dbReference>
<dbReference type="PDB" id="6CP3">
    <property type="method" value="EM"/>
    <property type="resolution" value="3.80 A"/>
    <property type="chains" value="U=7-101"/>
</dbReference>
<dbReference type="PDB" id="6CP5">
    <property type="method" value="EM"/>
    <property type="resolution" value="4.20 A"/>
    <property type="chains" value="U=7-101"/>
</dbReference>
<dbReference type="PDB" id="6CP6">
    <property type="method" value="EM"/>
    <property type="resolution" value="3.60 A"/>
    <property type="chains" value="U=7-101"/>
</dbReference>
<dbReference type="PDB" id="6CP7">
    <property type="method" value="EM"/>
    <property type="resolution" value="4.10 A"/>
    <property type="chains" value="U=7-101"/>
</dbReference>
<dbReference type="PDB" id="6WTD">
    <property type="method" value="EM"/>
    <property type="resolution" value="4.20 A"/>
    <property type="chains" value="U=7-101"/>
</dbReference>
<dbReference type="PDB" id="7TJY">
    <property type="method" value="EM"/>
    <property type="resolution" value="3.80 A"/>
    <property type="chains" value="W=7-101"/>
</dbReference>
<dbReference type="PDB" id="7TJZ">
    <property type="method" value="EM"/>
    <property type="resolution" value="4.40 A"/>
    <property type="chains" value="W=7-101"/>
</dbReference>
<dbReference type="PDB" id="7TK0">
    <property type="method" value="EM"/>
    <property type="resolution" value="4.40 A"/>
    <property type="chains" value="W=7-101"/>
</dbReference>
<dbReference type="PDB" id="7TK1">
    <property type="method" value="EM"/>
    <property type="resolution" value="7.10 A"/>
    <property type="chains" value="W=7-101"/>
</dbReference>
<dbReference type="PDB" id="7TK2">
    <property type="method" value="EM"/>
    <property type="resolution" value="6.50 A"/>
    <property type="chains" value="W=7-101"/>
</dbReference>
<dbReference type="PDB" id="7TK3">
    <property type="method" value="EM"/>
    <property type="resolution" value="6.30 A"/>
    <property type="chains" value="W=7-101"/>
</dbReference>
<dbReference type="PDB" id="7TK4">
    <property type="method" value="EM"/>
    <property type="resolution" value="7.00 A"/>
    <property type="chains" value="W=7-101"/>
</dbReference>
<dbReference type="PDB" id="7TK5">
    <property type="method" value="EM"/>
    <property type="resolution" value="7.80 A"/>
    <property type="chains" value="W=7-101"/>
</dbReference>
<dbReference type="PDB" id="7TK6">
    <property type="method" value="EM"/>
    <property type="resolution" value="6.50 A"/>
    <property type="chains" value="W=7-101"/>
</dbReference>
<dbReference type="PDB" id="7TK7">
    <property type="method" value="EM"/>
    <property type="resolution" value="6.70 A"/>
    <property type="chains" value="W=7-101"/>
</dbReference>
<dbReference type="PDB" id="7TK8">
    <property type="method" value="EM"/>
    <property type="resolution" value="4.70 A"/>
    <property type="chains" value="W=7-101"/>
</dbReference>
<dbReference type="PDB" id="7TK9">
    <property type="method" value="EM"/>
    <property type="resolution" value="6.00 A"/>
    <property type="chains" value="W=7-101"/>
</dbReference>
<dbReference type="PDB" id="7TKA">
    <property type="method" value="EM"/>
    <property type="resolution" value="7.10 A"/>
    <property type="chains" value="W=7-101"/>
</dbReference>
<dbReference type="PDB" id="7TKB">
    <property type="method" value="EM"/>
    <property type="resolution" value="6.30 A"/>
    <property type="chains" value="W=7-101"/>
</dbReference>
<dbReference type="PDB" id="7TKC">
    <property type="method" value="EM"/>
    <property type="resolution" value="5.80 A"/>
    <property type="chains" value="W=7-101"/>
</dbReference>
<dbReference type="PDB" id="7TKD">
    <property type="method" value="EM"/>
    <property type="resolution" value="7.70 A"/>
    <property type="chains" value="W=7-101"/>
</dbReference>
<dbReference type="PDB" id="7TKE">
    <property type="method" value="EM"/>
    <property type="resolution" value="7.10 A"/>
    <property type="chains" value="W=7-101"/>
</dbReference>
<dbReference type="PDB" id="7TKF">
    <property type="method" value="EM"/>
    <property type="resolution" value="7.10 A"/>
    <property type="chains" value="W=7-101"/>
</dbReference>
<dbReference type="PDB" id="7TKG">
    <property type="method" value="EM"/>
    <property type="resolution" value="4.50 A"/>
    <property type="chains" value="W=7-101"/>
</dbReference>
<dbReference type="PDB" id="7TKH">
    <property type="method" value="EM"/>
    <property type="resolution" value="4.40 A"/>
    <property type="chains" value="W=7-101"/>
</dbReference>
<dbReference type="PDB" id="7TKI">
    <property type="method" value="EM"/>
    <property type="resolution" value="7.10 A"/>
    <property type="chains" value="W=7-101"/>
</dbReference>
<dbReference type="PDB" id="7TKJ">
    <property type="method" value="EM"/>
    <property type="resolution" value="7.50 A"/>
    <property type="chains" value="W=7-101"/>
</dbReference>
<dbReference type="PDB" id="7TKK">
    <property type="method" value="EM"/>
    <property type="resolution" value="7.30 A"/>
    <property type="chains" value="W=7-101"/>
</dbReference>
<dbReference type="PDB" id="7TKL">
    <property type="method" value="EM"/>
    <property type="resolution" value="6.40 A"/>
    <property type="chains" value="W=7-101"/>
</dbReference>
<dbReference type="PDB" id="7TKM">
    <property type="method" value="EM"/>
    <property type="resolution" value="4.50 A"/>
    <property type="chains" value="W=7-101"/>
</dbReference>
<dbReference type="PDB" id="7TKN">
    <property type="method" value="EM"/>
    <property type="resolution" value="7.10 A"/>
    <property type="chains" value="W=7-101"/>
</dbReference>
<dbReference type="PDB" id="7TKO">
    <property type="method" value="EM"/>
    <property type="resolution" value="4.80 A"/>
    <property type="chains" value="W=7-101"/>
</dbReference>
<dbReference type="PDB" id="7TKP">
    <property type="method" value="EM"/>
    <property type="resolution" value="4.60 A"/>
    <property type="chains" value="W=7-101"/>
</dbReference>
<dbReference type="PDB" id="7TKQ">
    <property type="method" value="EM"/>
    <property type="resolution" value="4.50 A"/>
    <property type="chains" value="W=7-101"/>
</dbReference>
<dbReference type="PDB" id="7TKR">
    <property type="method" value="EM"/>
    <property type="resolution" value="6.50 A"/>
    <property type="chains" value="W=7-101"/>
</dbReference>
<dbReference type="PDB" id="7TKS">
    <property type="method" value="EM"/>
    <property type="resolution" value="7.50 A"/>
    <property type="chains" value="W=7-101"/>
</dbReference>
<dbReference type="PDB" id="8F29">
    <property type="method" value="EM"/>
    <property type="resolution" value="4.00 A"/>
    <property type="chains" value="U=7-91"/>
</dbReference>
<dbReference type="PDB" id="8F39">
    <property type="method" value="EM"/>
    <property type="resolution" value="3.50 A"/>
    <property type="chains" value="U=7-91"/>
</dbReference>
<dbReference type="PDB" id="8FKJ">
    <property type="method" value="EM"/>
    <property type="resolution" value="4.20 A"/>
    <property type="chains" value="U=7-91"/>
</dbReference>
<dbReference type="PDB" id="8FL8">
    <property type="method" value="EM"/>
    <property type="resolution" value="4.20 A"/>
    <property type="chains" value="U=7-91"/>
</dbReference>
<dbReference type="PDBsum" id="6B2Z"/>
<dbReference type="PDBsum" id="6B8H"/>
<dbReference type="PDBsum" id="6CP3"/>
<dbReference type="PDBsum" id="6CP5"/>
<dbReference type="PDBsum" id="6CP6"/>
<dbReference type="PDBsum" id="6CP7"/>
<dbReference type="PDBsum" id="6WTD"/>
<dbReference type="PDBsum" id="7TJY"/>
<dbReference type="PDBsum" id="7TJZ"/>
<dbReference type="PDBsum" id="7TK0"/>
<dbReference type="PDBsum" id="7TK1"/>
<dbReference type="PDBsum" id="7TK2"/>
<dbReference type="PDBsum" id="7TK3"/>
<dbReference type="PDBsum" id="7TK4"/>
<dbReference type="PDBsum" id="7TK5"/>
<dbReference type="PDBsum" id="7TK6"/>
<dbReference type="PDBsum" id="7TK7"/>
<dbReference type="PDBsum" id="7TK8"/>
<dbReference type="PDBsum" id="7TK9"/>
<dbReference type="PDBsum" id="7TKA"/>
<dbReference type="PDBsum" id="7TKB"/>
<dbReference type="PDBsum" id="7TKC"/>
<dbReference type="PDBsum" id="7TKD"/>
<dbReference type="PDBsum" id="7TKE"/>
<dbReference type="PDBsum" id="7TKF"/>
<dbReference type="PDBsum" id="7TKG"/>
<dbReference type="PDBsum" id="7TKH"/>
<dbReference type="PDBsum" id="7TKI"/>
<dbReference type="PDBsum" id="7TKJ"/>
<dbReference type="PDBsum" id="7TKK"/>
<dbReference type="PDBsum" id="7TKL"/>
<dbReference type="PDBsum" id="7TKM"/>
<dbReference type="PDBsum" id="7TKN"/>
<dbReference type="PDBsum" id="7TKO"/>
<dbReference type="PDBsum" id="7TKP"/>
<dbReference type="PDBsum" id="7TKQ"/>
<dbReference type="PDBsum" id="7TKR"/>
<dbReference type="PDBsum" id="7TKS"/>
<dbReference type="PDBsum" id="8F29"/>
<dbReference type="PDBsum" id="8F39"/>
<dbReference type="PDBsum" id="8FKJ"/>
<dbReference type="PDBsum" id="8FL8"/>
<dbReference type="EMDB" id="EMD-21894"/>
<dbReference type="EMDB" id="EMD-25946"/>
<dbReference type="EMDB" id="EMD-25947"/>
<dbReference type="EMDB" id="EMD-25948"/>
<dbReference type="EMDB" id="EMD-25949"/>
<dbReference type="EMDB" id="EMD-25954"/>
<dbReference type="EMDB" id="EMD-25955"/>
<dbReference type="EMDB" id="EMD-25956"/>
<dbReference type="EMDB" id="EMD-25957"/>
<dbReference type="EMDB" id="EMD-25958"/>
<dbReference type="EMDB" id="EMD-25959"/>
<dbReference type="EMDB" id="EMD-25960"/>
<dbReference type="EMDB" id="EMD-25961"/>
<dbReference type="EMDB" id="EMD-25962"/>
<dbReference type="EMDB" id="EMD-25963"/>
<dbReference type="EMDB" id="EMD-25964"/>
<dbReference type="EMDB" id="EMD-25965"/>
<dbReference type="EMDB" id="EMD-25966"/>
<dbReference type="EMDB" id="EMD-25967"/>
<dbReference type="EMDB" id="EMD-25968"/>
<dbReference type="EMDB" id="EMD-25969"/>
<dbReference type="EMDB" id="EMD-25970"/>
<dbReference type="EMDB" id="EMD-25971"/>
<dbReference type="EMDB" id="EMD-25972"/>
<dbReference type="EMDB" id="EMD-25973"/>
<dbReference type="EMDB" id="EMD-25974"/>
<dbReference type="EMDB" id="EMD-25975"/>
<dbReference type="EMDB" id="EMD-25976"/>
<dbReference type="EMDB" id="EMD-25977"/>
<dbReference type="EMDB" id="EMD-25978"/>
<dbReference type="EMDB" id="EMD-25979"/>
<dbReference type="EMDB" id="EMD-25980"/>
<dbReference type="EMDB" id="EMD-28809"/>
<dbReference type="EMDB" id="EMD-28835"/>
<dbReference type="EMDB" id="EMD-29250"/>
<dbReference type="EMDB" id="EMD-29270"/>
<dbReference type="EMDB" id="EMD-7036"/>
<dbReference type="EMDB" id="EMD-7546"/>
<dbReference type="EMDB" id="EMD-7547"/>
<dbReference type="EMDB" id="EMD-7548"/>
<dbReference type="EMDB" id="EMD-7549"/>
<dbReference type="SMR" id="Q06405"/>
<dbReference type="BioGRID" id="32436">
    <property type="interactions" value="72"/>
</dbReference>
<dbReference type="ComplexPortal" id="CPX-3281">
    <property type="entry name" value="Mitochondrial proton-transporting ATP synthase complex"/>
</dbReference>
<dbReference type="DIP" id="DIP-3033N"/>
<dbReference type="FunCoup" id="Q06405">
    <property type="interactions" value="147"/>
</dbReference>
<dbReference type="IntAct" id="Q06405">
    <property type="interactions" value="12"/>
</dbReference>
<dbReference type="STRING" id="4932.YDR377W"/>
<dbReference type="iPTMnet" id="Q06405"/>
<dbReference type="PaxDb" id="4932-YDR377W"/>
<dbReference type="PeptideAtlas" id="Q06405"/>
<dbReference type="EnsemblFungi" id="YDR377W_mRNA">
    <property type="protein sequence ID" value="YDR377W"/>
    <property type="gene ID" value="YDR377W"/>
</dbReference>
<dbReference type="GeneID" id="851983"/>
<dbReference type="KEGG" id="sce:YDR377W"/>
<dbReference type="AGR" id="SGD:S000002785"/>
<dbReference type="SGD" id="S000002785">
    <property type="gene designation" value="ATP17"/>
</dbReference>
<dbReference type="VEuPathDB" id="FungiDB:YDR377W"/>
<dbReference type="eggNOG" id="ENOG502S739">
    <property type="taxonomic scope" value="Eukaryota"/>
</dbReference>
<dbReference type="HOGENOM" id="CLU_152700_1_0_1"/>
<dbReference type="InParanoid" id="Q06405"/>
<dbReference type="OMA" id="TIDYQMH"/>
<dbReference type="OrthoDB" id="5561579at2759"/>
<dbReference type="BioCyc" id="YEAST:G3O-29926-MONOMER"/>
<dbReference type="BioGRID-ORCS" id="851983">
    <property type="hits" value="9 hits in 10 CRISPR screens"/>
</dbReference>
<dbReference type="PRO" id="PR:Q06405"/>
<dbReference type="Proteomes" id="UP000002311">
    <property type="component" value="Chromosome IV"/>
</dbReference>
<dbReference type="RNAct" id="Q06405">
    <property type="molecule type" value="protein"/>
</dbReference>
<dbReference type="GO" id="GO:0005743">
    <property type="term" value="C:mitochondrial inner membrane"/>
    <property type="evidence" value="ECO:0000314"/>
    <property type="project" value="ComplexPortal"/>
</dbReference>
<dbReference type="GO" id="GO:0005739">
    <property type="term" value="C:mitochondrion"/>
    <property type="evidence" value="ECO:0007005"/>
    <property type="project" value="SGD"/>
</dbReference>
<dbReference type="GO" id="GO:0045259">
    <property type="term" value="C:proton-transporting ATP synthase complex"/>
    <property type="evidence" value="ECO:0000315"/>
    <property type="project" value="SGD"/>
</dbReference>
<dbReference type="GO" id="GO:0015986">
    <property type="term" value="P:proton motive force-driven ATP synthesis"/>
    <property type="evidence" value="ECO:0000314"/>
    <property type="project" value="ComplexPortal"/>
</dbReference>
<dbReference type="GO" id="GO:1902600">
    <property type="term" value="P:proton transmembrane transport"/>
    <property type="evidence" value="ECO:0007669"/>
    <property type="project" value="UniProtKB-KW"/>
</dbReference>
<dbReference type="InterPro" id="IPR019727">
    <property type="entry name" value="ATP_synth_F0_fsu_mt_fun"/>
</dbReference>
<dbReference type="PANTHER" id="PTHR28161">
    <property type="entry name" value="ATP SYNTHASE SUBUNIT F, MITOCHONDRIAL"/>
    <property type="match status" value="1"/>
</dbReference>
<dbReference type="PANTHER" id="PTHR28161:SF1">
    <property type="entry name" value="ATP SYNTHASE SUBUNIT F, MITOCHONDRIAL"/>
    <property type="match status" value="1"/>
</dbReference>
<dbReference type="Pfam" id="PF10791">
    <property type="entry name" value="F1F0-ATPsyn_F"/>
    <property type="match status" value="1"/>
</dbReference>
<protein>
    <recommendedName>
        <fullName>ATP synthase subunit f, mitochondrial</fullName>
    </recommendedName>
</protein>
<sequence>MIFKRAVSTLIPPKVVSSKNIGSAPNAKRIANVVHFYKSLPQGPAPAIKANTRLARYKAKYFDGDNASGKPLWHFALGIIAFGYSMEYYFHLRHHKGAEEH</sequence>
<organism>
    <name type="scientific">Saccharomyces cerevisiae (strain ATCC 204508 / S288c)</name>
    <name type="common">Baker's yeast</name>
    <dbReference type="NCBI Taxonomy" id="559292"/>
    <lineage>
        <taxon>Eukaryota</taxon>
        <taxon>Fungi</taxon>
        <taxon>Dikarya</taxon>
        <taxon>Ascomycota</taxon>
        <taxon>Saccharomycotina</taxon>
        <taxon>Saccharomycetes</taxon>
        <taxon>Saccharomycetales</taxon>
        <taxon>Saccharomycetaceae</taxon>
        <taxon>Saccharomyces</taxon>
    </lineage>
</organism>
<gene>
    <name type="primary">ATP17</name>
    <name type="ordered locus">YDR377W</name>
    <name type="ORF">D9481.21</name>
</gene>
<feature type="transit peptide" description="Mitochondrion">
    <location>
        <begin position="1"/>
        <end position="6"/>
    </location>
</feature>
<feature type="chain" id="PRO_0000002637" description="ATP synthase subunit f, mitochondrial">
    <location>
        <begin position="7"/>
        <end position="101"/>
    </location>
</feature>
<name>ATPK_YEAST</name>
<accession>Q06405</accession>
<accession>D6VT09</accession>
<keyword id="KW-0002">3D-structure</keyword>
<keyword id="KW-0066">ATP synthesis</keyword>
<keyword id="KW-0138">CF(0)</keyword>
<keyword id="KW-0903">Direct protein sequencing</keyword>
<keyword id="KW-0375">Hydrogen ion transport</keyword>
<keyword id="KW-0406">Ion transport</keyword>
<keyword id="KW-0472">Membrane</keyword>
<keyword id="KW-0496">Mitochondrion</keyword>
<keyword id="KW-0999">Mitochondrion inner membrane</keyword>
<keyword id="KW-1185">Reference proteome</keyword>
<keyword id="KW-0809">Transit peptide</keyword>
<keyword id="KW-0813">Transport</keyword>
<reference key="1">
    <citation type="journal article" date="1997" name="Eur. J. Biochem.">
        <title>The subunit f of mitochondrial yeast ATP synthase -- characterization of the protein and disruption of the structural gene ATP17.</title>
        <authorList>
            <person name="Spannagel C."/>
            <person name="Vaillier J."/>
            <person name="Arselin G."/>
            <person name="Graves P.-V."/>
            <person name="Velours J."/>
        </authorList>
    </citation>
    <scope>NUCLEOTIDE SEQUENCE [GENOMIC DNA]</scope>
    <scope>PARTIAL PROTEIN SEQUENCE</scope>
    <scope>CHARACTERIZATION</scope>
    <scope>MASS SPECTROMETRY</scope>
    <source>
        <strain>D273-10B/A/H/U</strain>
    </source>
</reference>
<reference key="2">
    <citation type="journal article" date="1997" name="Nature">
        <title>The nucleotide sequence of Saccharomyces cerevisiae chromosome IV.</title>
        <authorList>
            <person name="Jacq C."/>
            <person name="Alt-Moerbe J."/>
            <person name="Andre B."/>
            <person name="Arnold W."/>
            <person name="Bahr A."/>
            <person name="Ballesta J.P.G."/>
            <person name="Bargues M."/>
            <person name="Baron L."/>
            <person name="Becker A."/>
            <person name="Biteau N."/>
            <person name="Bloecker H."/>
            <person name="Blugeon C."/>
            <person name="Boskovic J."/>
            <person name="Brandt P."/>
            <person name="Brueckner M."/>
            <person name="Buitrago M.J."/>
            <person name="Coster F."/>
            <person name="Delaveau T."/>
            <person name="del Rey F."/>
            <person name="Dujon B."/>
            <person name="Eide L.G."/>
            <person name="Garcia-Cantalejo J.M."/>
            <person name="Goffeau A."/>
            <person name="Gomez-Peris A."/>
            <person name="Granotier C."/>
            <person name="Hanemann V."/>
            <person name="Hankeln T."/>
            <person name="Hoheisel J.D."/>
            <person name="Jaeger W."/>
            <person name="Jimenez A."/>
            <person name="Jonniaux J.-L."/>
            <person name="Kraemer C."/>
            <person name="Kuester H."/>
            <person name="Laamanen P."/>
            <person name="Legros Y."/>
            <person name="Louis E.J."/>
            <person name="Moeller-Rieker S."/>
            <person name="Monnet A."/>
            <person name="Moro M."/>
            <person name="Mueller-Auer S."/>
            <person name="Nussbaumer B."/>
            <person name="Paricio N."/>
            <person name="Paulin L."/>
            <person name="Perea J."/>
            <person name="Perez-Alonso M."/>
            <person name="Perez-Ortin J.E."/>
            <person name="Pohl T.M."/>
            <person name="Prydz H."/>
            <person name="Purnelle B."/>
            <person name="Rasmussen S.W."/>
            <person name="Remacha M.A."/>
            <person name="Revuelta J.L."/>
            <person name="Rieger M."/>
            <person name="Salom D."/>
            <person name="Saluz H.P."/>
            <person name="Saiz J.E."/>
            <person name="Saren A.-M."/>
            <person name="Schaefer M."/>
            <person name="Scharfe M."/>
            <person name="Schmidt E.R."/>
            <person name="Schneider C."/>
            <person name="Scholler P."/>
            <person name="Schwarz S."/>
            <person name="Soler-Mira A."/>
            <person name="Urrestarazu L.A."/>
            <person name="Verhasselt P."/>
            <person name="Vissers S."/>
            <person name="Voet M."/>
            <person name="Volckaert G."/>
            <person name="Wagner G."/>
            <person name="Wambutt R."/>
            <person name="Wedler E."/>
            <person name="Wedler H."/>
            <person name="Woelfl S."/>
            <person name="Harris D.E."/>
            <person name="Bowman S."/>
            <person name="Brown D."/>
            <person name="Churcher C.M."/>
            <person name="Connor R."/>
            <person name="Dedman K."/>
            <person name="Gentles S."/>
            <person name="Hamlin N."/>
            <person name="Hunt S."/>
            <person name="Jones L."/>
            <person name="McDonald S."/>
            <person name="Murphy L.D."/>
            <person name="Niblett D."/>
            <person name="Odell C."/>
            <person name="Oliver K."/>
            <person name="Rajandream M.A."/>
            <person name="Richards C."/>
            <person name="Shore L."/>
            <person name="Walsh S.V."/>
            <person name="Barrell B.G."/>
            <person name="Dietrich F.S."/>
            <person name="Mulligan J.T."/>
            <person name="Allen E."/>
            <person name="Araujo R."/>
            <person name="Aviles E."/>
            <person name="Berno A."/>
            <person name="Carpenter J."/>
            <person name="Chen E."/>
            <person name="Cherry J.M."/>
            <person name="Chung E."/>
            <person name="Duncan M."/>
            <person name="Hunicke-Smith S."/>
            <person name="Hyman R.W."/>
            <person name="Komp C."/>
            <person name="Lashkari D."/>
            <person name="Lew H."/>
            <person name="Lin D."/>
            <person name="Mosedale D."/>
            <person name="Nakahara K."/>
            <person name="Namath A."/>
            <person name="Oefner P."/>
            <person name="Oh C."/>
            <person name="Petel F.X."/>
            <person name="Roberts D."/>
            <person name="Schramm S."/>
            <person name="Schroeder M."/>
            <person name="Shogren T."/>
            <person name="Shroff N."/>
            <person name="Winant A."/>
            <person name="Yelton M.A."/>
            <person name="Botstein D."/>
            <person name="Davis R.W."/>
            <person name="Johnston M."/>
            <person name="Andrews S."/>
            <person name="Brinkman R."/>
            <person name="Cooper J."/>
            <person name="Ding H."/>
            <person name="Du Z."/>
            <person name="Favello A."/>
            <person name="Fulton L."/>
            <person name="Gattung S."/>
            <person name="Greco T."/>
            <person name="Hallsworth K."/>
            <person name="Hawkins J."/>
            <person name="Hillier L.W."/>
            <person name="Jier M."/>
            <person name="Johnson D."/>
            <person name="Johnston L."/>
            <person name="Kirsten J."/>
            <person name="Kucaba T."/>
            <person name="Langston Y."/>
            <person name="Latreille P."/>
            <person name="Le T."/>
            <person name="Mardis E."/>
            <person name="Menezes S."/>
            <person name="Miller N."/>
            <person name="Nhan M."/>
            <person name="Pauley A."/>
            <person name="Peluso D."/>
            <person name="Rifkin L."/>
            <person name="Riles L."/>
            <person name="Taich A."/>
            <person name="Trevaskis E."/>
            <person name="Vignati D."/>
            <person name="Wilcox L."/>
            <person name="Wohldman P."/>
            <person name="Vaudin M."/>
            <person name="Wilson R."/>
            <person name="Waterston R."/>
            <person name="Albermann K."/>
            <person name="Hani J."/>
            <person name="Heumann K."/>
            <person name="Kleine K."/>
            <person name="Mewes H.-W."/>
            <person name="Zollner A."/>
            <person name="Zaccaria P."/>
        </authorList>
    </citation>
    <scope>NUCLEOTIDE SEQUENCE [LARGE SCALE GENOMIC DNA]</scope>
    <source>
        <strain>ATCC 204508 / S288c</strain>
    </source>
</reference>
<reference key="3">
    <citation type="journal article" date="2014" name="G3 (Bethesda)">
        <title>The reference genome sequence of Saccharomyces cerevisiae: Then and now.</title>
        <authorList>
            <person name="Engel S.R."/>
            <person name="Dietrich F.S."/>
            <person name="Fisk D.G."/>
            <person name="Binkley G."/>
            <person name="Balakrishnan R."/>
            <person name="Costanzo M.C."/>
            <person name="Dwight S.S."/>
            <person name="Hitz B.C."/>
            <person name="Karra K."/>
            <person name="Nash R.S."/>
            <person name="Weng S."/>
            <person name="Wong E.D."/>
            <person name="Lloyd P."/>
            <person name="Skrzypek M.S."/>
            <person name="Miyasato S.R."/>
            <person name="Simison M."/>
            <person name="Cherry J.M."/>
        </authorList>
    </citation>
    <scope>GENOME REANNOTATION</scope>
    <source>
        <strain>ATCC 204508 / S288c</strain>
    </source>
</reference>
<reference key="4">
    <citation type="journal article" date="2003" name="Nature">
        <title>Global analysis of protein expression in yeast.</title>
        <authorList>
            <person name="Ghaemmaghami S."/>
            <person name="Huh W.-K."/>
            <person name="Bower K."/>
            <person name="Howson R.W."/>
            <person name="Belle A."/>
            <person name="Dephoure N."/>
            <person name="O'Shea E.K."/>
            <person name="Weissman J.S."/>
        </authorList>
    </citation>
    <scope>LEVEL OF PROTEIN EXPRESSION [LARGE SCALE ANALYSIS]</scope>
</reference>